<reference key="1">
    <citation type="journal article" date="2005" name="Nucleic Acids Res.">
        <title>Genome dynamics and diversity of Shigella species, the etiologic agents of bacillary dysentery.</title>
        <authorList>
            <person name="Yang F."/>
            <person name="Yang J."/>
            <person name="Zhang X."/>
            <person name="Chen L."/>
            <person name="Jiang Y."/>
            <person name="Yan Y."/>
            <person name="Tang X."/>
            <person name="Wang J."/>
            <person name="Xiong Z."/>
            <person name="Dong J."/>
            <person name="Xue Y."/>
            <person name="Zhu Y."/>
            <person name="Xu X."/>
            <person name="Sun L."/>
            <person name="Chen S."/>
            <person name="Nie H."/>
            <person name="Peng J."/>
            <person name="Xu J."/>
            <person name="Wang Y."/>
            <person name="Yuan Z."/>
            <person name="Wen Y."/>
            <person name="Yao Z."/>
            <person name="Shen Y."/>
            <person name="Qiang B."/>
            <person name="Hou Y."/>
            <person name="Yu J."/>
            <person name="Jin Q."/>
        </authorList>
    </citation>
    <scope>NUCLEOTIDE SEQUENCE [LARGE SCALE GENOMIC DNA]</scope>
    <source>
        <strain>Sd197</strain>
    </source>
</reference>
<protein>
    <recommendedName>
        <fullName evidence="1">Uridylate kinase</fullName>
        <shortName evidence="1">UK</shortName>
        <ecNumber evidence="1">2.7.4.22</ecNumber>
    </recommendedName>
    <alternativeName>
        <fullName evidence="1">Uridine monophosphate kinase</fullName>
        <shortName evidence="1">UMP kinase</shortName>
        <shortName evidence="1">UMPK</shortName>
    </alternativeName>
</protein>
<feature type="chain" id="PRO_1000054017" description="Uridylate kinase">
    <location>
        <begin position="1"/>
        <end position="241"/>
    </location>
</feature>
<feature type="region of interest" description="Involved in allosteric activation by GTP" evidence="1">
    <location>
        <begin position="23"/>
        <end position="28"/>
    </location>
</feature>
<feature type="binding site" evidence="1">
    <location>
        <begin position="15"/>
        <end position="18"/>
    </location>
    <ligand>
        <name>ATP</name>
        <dbReference type="ChEBI" id="CHEBI:30616"/>
    </ligand>
</feature>
<feature type="binding site" evidence="1">
    <location>
        <position position="57"/>
    </location>
    <ligand>
        <name>UMP</name>
        <dbReference type="ChEBI" id="CHEBI:57865"/>
    </ligand>
</feature>
<feature type="binding site" evidence="1">
    <location>
        <position position="58"/>
    </location>
    <ligand>
        <name>ATP</name>
        <dbReference type="ChEBI" id="CHEBI:30616"/>
    </ligand>
</feature>
<feature type="binding site" evidence="1">
    <location>
        <position position="62"/>
    </location>
    <ligand>
        <name>ATP</name>
        <dbReference type="ChEBI" id="CHEBI:30616"/>
    </ligand>
</feature>
<feature type="binding site" evidence="1">
    <location>
        <position position="77"/>
    </location>
    <ligand>
        <name>UMP</name>
        <dbReference type="ChEBI" id="CHEBI:57865"/>
    </ligand>
</feature>
<feature type="binding site" evidence="1">
    <location>
        <begin position="138"/>
        <end position="145"/>
    </location>
    <ligand>
        <name>UMP</name>
        <dbReference type="ChEBI" id="CHEBI:57865"/>
    </ligand>
</feature>
<feature type="binding site" evidence="1">
    <location>
        <position position="165"/>
    </location>
    <ligand>
        <name>ATP</name>
        <dbReference type="ChEBI" id="CHEBI:30616"/>
    </ligand>
</feature>
<feature type="binding site" evidence="1">
    <location>
        <position position="171"/>
    </location>
    <ligand>
        <name>ATP</name>
        <dbReference type="ChEBI" id="CHEBI:30616"/>
    </ligand>
</feature>
<feature type="binding site" evidence="1">
    <location>
        <position position="174"/>
    </location>
    <ligand>
        <name>ATP</name>
        <dbReference type="ChEBI" id="CHEBI:30616"/>
    </ligand>
</feature>
<gene>
    <name evidence="1" type="primary">pyrH</name>
    <name type="ordered locus">SDY_0187</name>
</gene>
<sequence>MATNAKPVYKRILLKLSGEALQGTEGFGIDASILDRMAQEIKELVELGIQVGVVIGGGNLFRGAGLAKAGMNRVVGDHMGMLATVMNGLAMRDALHRAYVNARLMSAIPLNGVCDSYSWAEAISLLRNNRVVLLSAGTGNPFFTTDSAACLRGIEIEADVVLKATKVDGVFTADPAKDPTATMYEQLTYSEVLEKELKVMDLAAFTLARDHKLPIRVFNMNKPGALRRVVMGEKEGTLITE</sequence>
<organism>
    <name type="scientific">Shigella dysenteriae serotype 1 (strain Sd197)</name>
    <dbReference type="NCBI Taxonomy" id="300267"/>
    <lineage>
        <taxon>Bacteria</taxon>
        <taxon>Pseudomonadati</taxon>
        <taxon>Pseudomonadota</taxon>
        <taxon>Gammaproteobacteria</taxon>
        <taxon>Enterobacterales</taxon>
        <taxon>Enterobacteriaceae</taxon>
        <taxon>Shigella</taxon>
    </lineage>
</organism>
<proteinExistence type="inferred from homology"/>
<evidence type="ECO:0000255" key="1">
    <source>
        <dbReference type="HAMAP-Rule" id="MF_01220"/>
    </source>
</evidence>
<name>PYRH_SHIDS</name>
<keyword id="KW-0021">Allosteric enzyme</keyword>
<keyword id="KW-0067">ATP-binding</keyword>
<keyword id="KW-0963">Cytoplasm</keyword>
<keyword id="KW-0418">Kinase</keyword>
<keyword id="KW-0547">Nucleotide-binding</keyword>
<keyword id="KW-0665">Pyrimidine biosynthesis</keyword>
<keyword id="KW-1185">Reference proteome</keyword>
<keyword id="KW-0808">Transferase</keyword>
<comment type="function">
    <text evidence="1">Catalyzes the reversible phosphorylation of UMP to UDP.</text>
</comment>
<comment type="catalytic activity">
    <reaction evidence="1">
        <text>UMP + ATP = UDP + ADP</text>
        <dbReference type="Rhea" id="RHEA:24400"/>
        <dbReference type="ChEBI" id="CHEBI:30616"/>
        <dbReference type="ChEBI" id="CHEBI:57865"/>
        <dbReference type="ChEBI" id="CHEBI:58223"/>
        <dbReference type="ChEBI" id="CHEBI:456216"/>
        <dbReference type="EC" id="2.7.4.22"/>
    </reaction>
</comment>
<comment type="activity regulation">
    <text evidence="1">Allosterically activated by GTP. Inhibited by UTP.</text>
</comment>
<comment type="pathway">
    <text evidence="1">Pyrimidine metabolism; CTP biosynthesis via de novo pathway; UDP from UMP (UMPK route): step 1/1.</text>
</comment>
<comment type="subunit">
    <text evidence="1">Homohexamer.</text>
</comment>
<comment type="subcellular location">
    <subcellularLocation>
        <location evidence="1">Cytoplasm</location>
    </subcellularLocation>
</comment>
<comment type="similarity">
    <text evidence="1">Belongs to the UMP kinase family.</text>
</comment>
<accession>Q32JT8</accession>
<dbReference type="EC" id="2.7.4.22" evidence="1"/>
<dbReference type="EMBL" id="CP000034">
    <property type="protein sequence ID" value="ABB60419.1"/>
    <property type="molecule type" value="Genomic_DNA"/>
</dbReference>
<dbReference type="RefSeq" id="WP_000224576.1">
    <property type="nucleotide sequence ID" value="NC_007606.1"/>
</dbReference>
<dbReference type="RefSeq" id="YP_401908.1">
    <property type="nucleotide sequence ID" value="NC_007606.1"/>
</dbReference>
<dbReference type="SMR" id="Q32JT8"/>
<dbReference type="STRING" id="300267.SDY_0187"/>
<dbReference type="EnsemblBacteria" id="ABB60419">
    <property type="protein sequence ID" value="ABB60419"/>
    <property type="gene ID" value="SDY_0187"/>
</dbReference>
<dbReference type="KEGG" id="sdy:SDY_0187"/>
<dbReference type="PATRIC" id="fig|300267.13.peg.217"/>
<dbReference type="HOGENOM" id="CLU_033861_0_0_6"/>
<dbReference type="UniPathway" id="UPA00159">
    <property type="reaction ID" value="UER00275"/>
</dbReference>
<dbReference type="Proteomes" id="UP000002716">
    <property type="component" value="Chromosome"/>
</dbReference>
<dbReference type="GO" id="GO:0005829">
    <property type="term" value="C:cytosol"/>
    <property type="evidence" value="ECO:0007669"/>
    <property type="project" value="TreeGrafter"/>
</dbReference>
<dbReference type="GO" id="GO:0005524">
    <property type="term" value="F:ATP binding"/>
    <property type="evidence" value="ECO:0007669"/>
    <property type="project" value="UniProtKB-KW"/>
</dbReference>
<dbReference type="GO" id="GO:0033862">
    <property type="term" value="F:UMP kinase activity"/>
    <property type="evidence" value="ECO:0007669"/>
    <property type="project" value="UniProtKB-EC"/>
</dbReference>
<dbReference type="GO" id="GO:0044210">
    <property type="term" value="P:'de novo' CTP biosynthetic process"/>
    <property type="evidence" value="ECO:0007669"/>
    <property type="project" value="UniProtKB-UniRule"/>
</dbReference>
<dbReference type="GO" id="GO:0006225">
    <property type="term" value="P:UDP biosynthetic process"/>
    <property type="evidence" value="ECO:0007669"/>
    <property type="project" value="TreeGrafter"/>
</dbReference>
<dbReference type="CDD" id="cd04254">
    <property type="entry name" value="AAK_UMPK-PyrH-Ec"/>
    <property type="match status" value="1"/>
</dbReference>
<dbReference type="FunFam" id="3.40.1160.10:FF:000001">
    <property type="entry name" value="Uridylate kinase"/>
    <property type="match status" value="1"/>
</dbReference>
<dbReference type="Gene3D" id="3.40.1160.10">
    <property type="entry name" value="Acetylglutamate kinase-like"/>
    <property type="match status" value="1"/>
</dbReference>
<dbReference type="HAMAP" id="MF_01220_B">
    <property type="entry name" value="PyrH_B"/>
    <property type="match status" value="1"/>
</dbReference>
<dbReference type="InterPro" id="IPR036393">
    <property type="entry name" value="AceGlu_kinase-like_sf"/>
</dbReference>
<dbReference type="InterPro" id="IPR001048">
    <property type="entry name" value="Asp/Glu/Uridylate_kinase"/>
</dbReference>
<dbReference type="InterPro" id="IPR011817">
    <property type="entry name" value="Uridylate_kinase"/>
</dbReference>
<dbReference type="InterPro" id="IPR015963">
    <property type="entry name" value="Uridylate_kinase_bac"/>
</dbReference>
<dbReference type="NCBIfam" id="TIGR02075">
    <property type="entry name" value="pyrH_bact"/>
    <property type="match status" value="1"/>
</dbReference>
<dbReference type="PANTHER" id="PTHR42833">
    <property type="entry name" value="URIDYLATE KINASE"/>
    <property type="match status" value="1"/>
</dbReference>
<dbReference type="PANTHER" id="PTHR42833:SF4">
    <property type="entry name" value="URIDYLATE KINASE PUMPKIN, CHLOROPLASTIC"/>
    <property type="match status" value="1"/>
</dbReference>
<dbReference type="Pfam" id="PF00696">
    <property type="entry name" value="AA_kinase"/>
    <property type="match status" value="1"/>
</dbReference>
<dbReference type="PIRSF" id="PIRSF005650">
    <property type="entry name" value="Uridylate_kin"/>
    <property type="match status" value="1"/>
</dbReference>
<dbReference type="SUPFAM" id="SSF53633">
    <property type="entry name" value="Carbamate kinase-like"/>
    <property type="match status" value="1"/>
</dbReference>